<keyword id="KW-0067">ATP-binding</keyword>
<keyword id="KW-0173">Coenzyme A biosynthesis</keyword>
<keyword id="KW-0963">Cytoplasm</keyword>
<keyword id="KW-0460">Magnesium</keyword>
<keyword id="KW-0547">Nucleotide-binding</keyword>
<keyword id="KW-0548">Nucleotidyltransferase</keyword>
<keyword id="KW-0808">Transferase</keyword>
<proteinExistence type="inferred from homology"/>
<comment type="function">
    <text evidence="1">Reversibly transfers an adenylyl group from ATP to 4'-phosphopantetheine, yielding dephospho-CoA (dPCoA) and pyrophosphate.</text>
</comment>
<comment type="catalytic activity">
    <reaction evidence="1">
        <text>(R)-4'-phosphopantetheine + ATP + H(+) = 3'-dephospho-CoA + diphosphate</text>
        <dbReference type="Rhea" id="RHEA:19801"/>
        <dbReference type="ChEBI" id="CHEBI:15378"/>
        <dbReference type="ChEBI" id="CHEBI:30616"/>
        <dbReference type="ChEBI" id="CHEBI:33019"/>
        <dbReference type="ChEBI" id="CHEBI:57328"/>
        <dbReference type="ChEBI" id="CHEBI:61723"/>
        <dbReference type="EC" id="2.7.7.3"/>
    </reaction>
</comment>
<comment type="cofactor">
    <cofactor evidence="1">
        <name>Mg(2+)</name>
        <dbReference type="ChEBI" id="CHEBI:18420"/>
    </cofactor>
</comment>
<comment type="pathway">
    <text evidence="1">Cofactor biosynthesis; coenzyme A biosynthesis; CoA from (R)-pantothenate: step 4/5.</text>
</comment>
<comment type="subunit">
    <text evidence="1">Homohexamer.</text>
</comment>
<comment type="subcellular location">
    <subcellularLocation>
        <location evidence="1">Cytoplasm</location>
    </subcellularLocation>
</comment>
<comment type="similarity">
    <text evidence="1">Belongs to the bacterial CoaD family.</text>
</comment>
<evidence type="ECO:0000255" key="1">
    <source>
        <dbReference type="HAMAP-Rule" id="MF_00151"/>
    </source>
</evidence>
<accession>B2V4C6</accession>
<dbReference type="EC" id="2.7.7.3" evidence="1"/>
<dbReference type="EMBL" id="CP001078">
    <property type="protein sequence ID" value="ACD53772.1"/>
    <property type="molecule type" value="Genomic_DNA"/>
</dbReference>
<dbReference type="RefSeq" id="WP_003371809.1">
    <property type="nucleotide sequence ID" value="NC_010723.1"/>
</dbReference>
<dbReference type="SMR" id="B2V4C6"/>
<dbReference type="KEGG" id="cbt:CLH_1181"/>
<dbReference type="HOGENOM" id="CLU_100149_0_1_9"/>
<dbReference type="UniPathway" id="UPA00241">
    <property type="reaction ID" value="UER00355"/>
</dbReference>
<dbReference type="GO" id="GO:0005737">
    <property type="term" value="C:cytoplasm"/>
    <property type="evidence" value="ECO:0007669"/>
    <property type="project" value="UniProtKB-SubCell"/>
</dbReference>
<dbReference type="GO" id="GO:0005524">
    <property type="term" value="F:ATP binding"/>
    <property type="evidence" value="ECO:0007669"/>
    <property type="project" value="UniProtKB-KW"/>
</dbReference>
<dbReference type="GO" id="GO:0004595">
    <property type="term" value="F:pantetheine-phosphate adenylyltransferase activity"/>
    <property type="evidence" value="ECO:0007669"/>
    <property type="project" value="UniProtKB-UniRule"/>
</dbReference>
<dbReference type="GO" id="GO:0015937">
    <property type="term" value="P:coenzyme A biosynthetic process"/>
    <property type="evidence" value="ECO:0007669"/>
    <property type="project" value="UniProtKB-UniRule"/>
</dbReference>
<dbReference type="CDD" id="cd02163">
    <property type="entry name" value="PPAT"/>
    <property type="match status" value="1"/>
</dbReference>
<dbReference type="Gene3D" id="3.40.50.620">
    <property type="entry name" value="HUPs"/>
    <property type="match status" value="1"/>
</dbReference>
<dbReference type="HAMAP" id="MF_00151">
    <property type="entry name" value="PPAT_bact"/>
    <property type="match status" value="1"/>
</dbReference>
<dbReference type="InterPro" id="IPR004821">
    <property type="entry name" value="Cyt_trans-like"/>
</dbReference>
<dbReference type="InterPro" id="IPR001980">
    <property type="entry name" value="PPAT"/>
</dbReference>
<dbReference type="InterPro" id="IPR014729">
    <property type="entry name" value="Rossmann-like_a/b/a_fold"/>
</dbReference>
<dbReference type="NCBIfam" id="TIGR01510">
    <property type="entry name" value="coaD_prev_kdtB"/>
    <property type="match status" value="1"/>
</dbReference>
<dbReference type="NCBIfam" id="TIGR00125">
    <property type="entry name" value="cyt_tran_rel"/>
    <property type="match status" value="1"/>
</dbReference>
<dbReference type="PANTHER" id="PTHR21342">
    <property type="entry name" value="PHOSPHOPANTETHEINE ADENYLYLTRANSFERASE"/>
    <property type="match status" value="1"/>
</dbReference>
<dbReference type="PANTHER" id="PTHR21342:SF1">
    <property type="entry name" value="PHOSPHOPANTETHEINE ADENYLYLTRANSFERASE"/>
    <property type="match status" value="1"/>
</dbReference>
<dbReference type="Pfam" id="PF01467">
    <property type="entry name" value="CTP_transf_like"/>
    <property type="match status" value="1"/>
</dbReference>
<dbReference type="PRINTS" id="PR01020">
    <property type="entry name" value="LPSBIOSNTHSS"/>
</dbReference>
<dbReference type="SUPFAM" id="SSF52374">
    <property type="entry name" value="Nucleotidylyl transferase"/>
    <property type="match status" value="1"/>
</dbReference>
<protein>
    <recommendedName>
        <fullName evidence="1">Phosphopantetheine adenylyltransferase</fullName>
        <ecNumber evidence="1">2.7.7.3</ecNumber>
    </recommendedName>
    <alternativeName>
        <fullName evidence="1">Dephospho-CoA pyrophosphorylase</fullName>
    </alternativeName>
    <alternativeName>
        <fullName evidence="1">Pantetheine-phosphate adenylyltransferase</fullName>
        <shortName evidence="1">PPAT</shortName>
    </alternativeName>
</protein>
<sequence length="159" mass="17890">MKVAVYPGSFDPITNGHLDIIERGSKVFDKLIIGVLVNVDKKGLFEIEERVELIKKVTKHIKNVEVISFNGLLIDFLKAYNAKIILKGLRAVSDFEYEFKMALMNNKLDPDIETVFMMTSAQYSYLSSSSVKQVAKFGGCIEGLVPKEIISDVVRRSKI</sequence>
<reference key="1">
    <citation type="submission" date="2008-05" db="EMBL/GenBank/DDBJ databases">
        <title>Complete genome sequence of Clostridium botulinum E3 str. Alaska E43.</title>
        <authorList>
            <person name="Brinkac L.M."/>
            <person name="Brown J.L."/>
            <person name="Bruce D."/>
            <person name="Detter C."/>
            <person name="Munk C."/>
            <person name="Smith L.A."/>
            <person name="Smith T.J."/>
            <person name="Sutton G."/>
            <person name="Brettin T.S."/>
        </authorList>
    </citation>
    <scope>NUCLEOTIDE SEQUENCE [LARGE SCALE GENOMIC DNA]</scope>
    <source>
        <strain>Alaska E43 / Type E3</strain>
    </source>
</reference>
<gene>
    <name evidence="1" type="primary">coaD</name>
    <name type="ordered locus">CLH_1181</name>
</gene>
<name>COAD_CLOBA</name>
<organism>
    <name type="scientific">Clostridium botulinum (strain Alaska E43 / Type E3)</name>
    <dbReference type="NCBI Taxonomy" id="508767"/>
    <lineage>
        <taxon>Bacteria</taxon>
        <taxon>Bacillati</taxon>
        <taxon>Bacillota</taxon>
        <taxon>Clostridia</taxon>
        <taxon>Eubacteriales</taxon>
        <taxon>Clostridiaceae</taxon>
        <taxon>Clostridium</taxon>
    </lineage>
</organism>
<feature type="chain" id="PRO_1000096779" description="Phosphopantetheine adenylyltransferase">
    <location>
        <begin position="1"/>
        <end position="159"/>
    </location>
</feature>
<feature type="binding site" evidence="1">
    <location>
        <begin position="9"/>
        <end position="10"/>
    </location>
    <ligand>
        <name>ATP</name>
        <dbReference type="ChEBI" id="CHEBI:30616"/>
    </ligand>
</feature>
<feature type="binding site" evidence="1">
    <location>
        <position position="9"/>
    </location>
    <ligand>
        <name>substrate</name>
    </ligand>
</feature>
<feature type="binding site" evidence="1">
    <location>
        <position position="17"/>
    </location>
    <ligand>
        <name>ATP</name>
        <dbReference type="ChEBI" id="CHEBI:30616"/>
    </ligand>
</feature>
<feature type="binding site" evidence="1">
    <location>
        <position position="41"/>
    </location>
    <ligand>
        <name>substrate</name>
    </ligand>
</feature>
<feature type="binding site" evidence="1">
    <location>
        <position position="73"/>
    </location>
    <ligand>
        <name>substrate</name>
    </ligand>
</feature>
<feature type="binding site" evidence="1">
    <location>
        <position position="87"/>
    </location>
    <ligand>
        <name>substrate</name>
    </ligand>
</feature>
<feature type="binding site" evidence="1">
    <location>
        <begin position="88"/>
        <end position="90"/>
    </location>
    <ligand>
        <name>ATP</name>
        <dbReference type="ChEBI" id="CHEBI:30616"/>
    </ligand>
</feature>
<feature type="binding site" evidence="1">
    <location>
        <position position="98"/>
    </location>
    <ligand>
        <name>ATP</name>
        <dbReference type="ChEBI" id="CHEBI:30616"/>
    </ligand>
</feature>
<feature type="binding site" evidence="1">
    <location>
        <begin position="123"/>
        <end position="129"/>
    </location>
    <ligand>
        <name>ATP</name>
        <dbReference type="ChEBI" id="CHEBI:30616"/>
    </ligand>
</feature>
<feature type="site" description="Transition state stabilizer" evidence="1">
    <location>
        <position position="17"/>
    </location>
</feature>